<reference key="1">
    <citation type="journal article" date="2007" name="Nat. Biotechnol.">
        <title>Complete genome sequence of the myxobacterium Sorangium cellulosum.</title>
        <authorList>
            <person name="Schneiker S."/>
            <person name="Perlova O."/>
            <person name="Kaiser O."/>
            <person name="Gerth K."/>
            <person name="Alici A."/>
            <person name="Altmeyer M.O."/>
            <person name="Bartels D."/>
            <person name="Bekel T."/>
            <person name="Beyer S."/>
            <person name="Bode E."/>
            <person name="Bode H.B."/>
            <person name="Bolten C.J."/>
            <person name="Choudhuri J.V."/>
            <person name="Doss S."/>
            <person name="Elnakady Y.A."/>
            <person name="Frank B."/>
            <person name="Gaigalat L."/>
            <person name="Goesmann A."/>
            <person name="Groeger C."/>
            <person name="Gross F."/>
            <person name="Jelsbak L."/>
            <person name="Jelsbak L."/>
            <person name="Kalinowski J."/>
            <person name="Kegler C."/>
            <person name="Knauber T."/>
            <person name="Konietzny S."/>
            <person name="Kopp M."/>
            <person name="Krause L."/>
            <person name="Krug D."/>
            <person name="Linke B."/>
            <person name="Mahmud T."/>
            <person name="Martinez-Arias R."/>
            <person name="McHardy A.C."/>
            <person name="Merai M."/>
            <person name="Meyer F."/>
            <person name="Mormann S."/>
            <person name="Munoz-Dorado J."/>
            <person name="Perez J."/>
            <person name="Pradella S."/>
            <person name="Rachid S."/>
            <person name="Raddatz G."/>
            <person name="Rosenau F."/>
            <person name="Rueckert C."/>
            <person name="Sasse F."/>
            <person name="Scharfe M."/>
            <person name="Schuster S.C."/>
            <person name="Suen G."/>
            <person name="Treuner-Lange A."/>
            <person name="Velicer G.J."/>
            <person name="Vorholter F.-J."/>
            <person name="Weissman K.J."/>
            <person name="Welch R.D."/>
            <person name="Wenzel S.C."/>
            <person name="Whitworth D.E."/>
            <person name="Wilhelm S."/>
            <person name="Wittmann C."/>
            <person name="Bloecker H."/>
            <person name="Puehler A."/>
            <person name="Mueller R."/>
        </authorList>
    </citation>
    <scope>NUCLEOTIDE SEQUENCE [LARGE SCALE GENOMIC DNA]</scope>
    <source>
        <strain>So ce56</strain>
    </source>
</reference>
<proteinExistence type="inferred from homology"/>
<gene>
    <name evidence="1" type="primary">coaA</name>
    <name type="ordered locus">sce5152</name>
</gene>
<keyword id="KW-0067">ATP-binding</keyword>
<keyword id="KW-0173">Coenzyme A biosynthesis</keyword>
<keyword id="KW-0963">Cytoplasm</keyword>
<keyword id="KW-0418">Kinase</keyword>
<keyword id="KW-0547">Nucleotide-binding</keyword>
<keyword id="KW-1185">Reference proteome</keyword>
<keyword id="KW-0808">Transferase</keyword>
<evidence type="ECO:0000255" key="1">
    <source>
        <dbReference type="HAMAP-Rule" id="MF_00215"/>
    </source>
</evidence>
<protein>
    <recommendedName>
        <fullName evidence="1">Pantothenate kinase</fullName>
        <ecNumber evidence="1">2.7.1.33</ecNumber>
    </recommendedName>
    <alternativeName>
        <fullName evidence="1">Pantothenic acid kinase</fullName>
    </alternativeName>
</protein>
<sequence length="308" mass="34144">MDAVTTYEVFSAAQWAGLRAATPLPLTEGDLMVLRGLNERLSLDEVATIYLPLSRLLNLHVGAAQQLRRVKDTFLGRPVGRRPFVIGIAGSVAVGKSTTARVLQALLARWPDHPRVDLVTTDGFLYPNAVLASRAGLHRKGFPESYDLRRLVQFLADLEAGVEAIDVPVYSHATYDVVAGKAQTVRQPDIVILEGLNVLQGPERAAAIAVSDFFDLGIYVHADEADLERWYIERFLTLRATAFRDPSSYFHRYAAMGDDEARAFALQIWRTINGPNLTENILPTRARADVVLEKGPDHAVRAVHLRRL</sequence>
<comment type="catalytic activity">
    <reaction evidence="1">
        <text>(R)-pantothenate + ATP = (R)-4'-phosphopantothenate + ADP + H(+)</text>
        <dbReference type="Rhea" id="RHEA:16373"/>
        <dbReference type="ChEBI" id="CHEBI:10986"/>
        <dbReference type="ChEBI" id="CHEBI:15378"/>
        <dbReference type="ChEBI" id="CHEBI:29032"/>
        <dbReference type="ChEBI" id="CHEBI:30616"/>
        <dbReference type="ChEBI" id="CHEBI:456216"/>
        <dbReference type="EC" id="2.7.1.33"/>
    </reaction>
</comment>
<comment type="pathway">
    <text evidence="1">Cofactor biosynthesis; coenzyme A biosynthesis; CoA from (R)-pantothenate: step 1/5.</text>
</comment>
<comment type="subcellular location">
    <subcellularLocation>
        <location evidence="1">Cytoplasm</location>
    </subcellularLocation>
</comment>
<comment type="similarity">
    <text evidence="1">Belongs to the prokaryotic pantothenate kinase family.</text>
</comment>
<dbReference type="EC" id="2.7.1.33" evidence="1"/>
<dbReference type="EMBL" id="AM746676">
    <property type="protein sequence ID" value="CAN95315.1"/>
    <property type="molecule type" value="Genomic_DNA"/>
</dbReference>
<dbReference type="RefSeq" id="WP_012237783.1">
    <property type="nucleotide sequence ID" value="NC_010162.1"/>
</dbReference>
<dbReference type="SMR" id="A9FRP1"/>
<dbReference type="STRING" id="448385.sce5152"/>
<dbReference type="KEGG" id="scl:sce5152"/>
<dbReference type="eggNOG" id="COG1072">
    <property type="taxonomic scope" value="Bacteria"/>
</dbReference>
<dbReference type="HOGENOM" id="CLU_053818_1_1_7"/>
<dbReference type="OrthoDB" id="1550976at2"/>
<dbReference type="BioCyc" id="SCEL448385:SCE_RS26440-MONOMER"/>
<dbReference type="UniPathway" id="UPA00241">
    <property type="reaction ID" value="UER00352"/>
</dbReference>
<dbReference type="Proteomes" id="UP000002139">
    <property type="component" value="Chromosome"/>
</dbReference>
<dbReference type="GO" id="GO:0005737">
    <property type="term" value="C:cytoplasm"/>
    <property type="evidence" value="ECO:0007669"/>
    <property type="project" value="UniProtKB-SubCell"/>
</dbReference>
<dbReference type="GO" id="GO:0005524">
    <property type="term" value="F:ATP binding"/>
    <property type="evidence" value="ECO:0007669"/>
    <property type="project" value="UniProtKB-UniRule"/>
</dbReference>
<dbReference type="GO" id="GO:0004594">
    <property type="term" value="F:pantothenate kinase activity"/>
    <property type="evidence" value="ECO:0007669"/>
    <property type="project" value="UniProtKB-UniRule"/>
</dbReference>
<dbReference type="GO" id="GO:0015937">
    <property type="term" value="P:coenzyme A biosynthetic process"/>
    <property type="evidence" value="ECO:0007669"/>
    <property type="project" value="UniProtKB-UniRule"/>
</dbReference>
<dbReference type="CDD" id="cd02025">
    <property type="entry name" value="PanK"/>
    <property type="match status" value="1"/>
</dbReference>
<dbReference type="Gene3D" id="3.40.50.300">
    <property type="entry name" value="P-loop containing nucleotide triphosphate hydrolases"/>
    <property type="match status" value="1"/>
</dbReference>
<dbReference type="HAMAP" id="MF_00215">
    <property type="entry name" value="Pantothen_kinase_1"/>
    <property type="match status" value="1"/>
</dbReference>
<dbReference type="InterPro" id="IPR027417">
    <property type="entry name" value="P-loop_NTPase"/>
</dbReference>
<dbReference type="InterPro" id="IPR004566">
    <property type="entry name" value="PanK"/>
</dbReference>
<dbReference type="InterPro" id="IPR006083">
    <property type="entry name" value="PRK/URK"/>
</dbReference>
<dbReference type="NCBIfam" id="TIGR00554">
    <property type="entry name" value="panK_bact"/>
    <property type="match status" value="1"/>
</dbReference>
<dbReference type="PANTHER" id="PTHR10285">
    <property type="entry name" value="URIDINE KINASE"/>
    <property type="match status" value="1"/>
</dbReference>
<dbReference type="Pfam" id="PF00485">
    <property type="entry name" value="PRK"/>
    <property type="match status" value="1"/>
</dbReference>
<dbReference type="PIRSF" id="PIRSF000545">
    <property type="entry name" value="Pantothenate_kin"/>
    <property type="match status" value="1"/>
</dbReference>
<dbReference type="SUPFAM" id="SSF52540">
    <property type="entry name" value="P-loop containing nucleoside triphosphate hydrolases"/>
    <property type="match status" value="1"/>
</dbReference>
<accession>A9FRP1</accession>
<organism>
    <name type="scientific">Sorangium cellulosum (strain So ce56)</name>
    <name type="common">Polyangium cellulosum (strain So ce56)</name>
    <dbReference type="NCBI Taxonomy" id="448385"/>
    <lineage>
        <taxon>Bacteria</taxon>
        <taxon>Pseudomonadati</taxon>
        <taxon>Myxococcota</taxon>
        <taxon>Polyangia</taxon>
        <taxon>Polyangiales</taxon>
        <taxon>Polyangiaceae</taxon>
        <taxon>Sorangium</taxon>
    </lineage>
</organism>
<feature type="chain" id="PRO_1000124807" description="Pantothenate kinase">
    <location>
        <begin position="1"/>
        <end position="308"/>
    </location>
</feature>
<feature type="binding site" evidence="1">
    <location>
        <begin position="90"/>
        <end position="97"/>
    </location>
    <ligand>
        <name>ATP</name>
        <dbReference type="ChEBI" id="CHEBI:30616"/>
    </ligand>
</feature>
<name>COAA_SORC5</name>